<name>MASY_DICDI</name>
<protein>
    <recommendedName>
        <fullName>Malate synthase</fullName>
        <ecNumber>2.3.3.9</ecNumber>
    </recommendedName>
</protein>
<keyword id="KW-0329">Glyoxylate bypass</keyword>
<keyword id="KW-1185">Reference proteome</keyword>
<keyword id="KW-0808">Transferase</keyword>
<keyword id="KW-0816">Tricarboxylic acid cycle</keyword>
<comment type="catalytic activity">
    <reaction>
        <text>glyoxylate + acetyl-CoA + H2O = (S)-malate + CoA + H(+)</text>
        <dbReference type="Rhea" id="RHEA:18181"/>
        <dbReference type="ChEBI" id="CHEBI:15377"/>
        <dbReference type="ChEBI" id="CHEBI:15378"/>
        <dbReference type="ChEBI" id="CHEBI:15589"/>
        <dbReference type="ChEBI" id="CHEBI:36655"/>
        <dbReference type="ChEBI" id="CHEBI:57287"/>
        <dbReference type="ChEBI" id="CHEBI:57288"/>
        <dbReference type="EC" id="2.3.3.9"/>
    </reaction>
</comment>
<comment type="pathway">
    <text>Carbohydrate metabolism; glyoxylate cycle; (S)-malate from isocitrate: step 2/2.</text>
</comment>
<comment type="developmental stage">
    <text evidence="2">Late prestalk cell-specific expression.</text>
</comment>
<comment type="similarity">
    <text evidence="3">Belongs to the malate synthase family.</text>
</comment>
<feature type="chain" id="PRO_0000365606" description="Malate synthase">
    <location>
        <begin position="1"/>
        <end position="543"/>
    </location>
</feature>
<feature type="active site" description="Proton acceptor" evidence="1">
    <location>
        <position position="162"/>
    </location>
</feature>
<feature type="active site" description="Proton donor" evidence="1">
    <location>
        <position position="449"/>
    </location>
</feature>
<evidence type="ECO:0000250" key="1"/>
<evidence type="ECO:0000269" key="2">
    <source>
    </source>
</evidence>
<evidence type="ECO:0000305" key="3"/>
<gene>
    <name type="primary">masA</name>
    <name type="ORF">DDB_G0275887</name>
</gene>
<sequence length="543" mass="62030">MLRGIEIRGKVDKNVKSILTEECLTFLGELERRFGGIRKNLLQKRLDRQIDINNGILPSFLKDSDCKRATDKNWKCSSVPLEIQDRRVEITGPTDRKMVINALNSGAKVFMADFEDANCPNWENSIHGQQNMIDANNRTISFTSAEGRKYELNKQVAVLFVRPRGWHLNEDHLAIDGLSMSGSLFDFGCYIFHNHQILKNRNSNPYFYLPKMESHLEARLWNDVFVFSQNYLGMPIGTIKATVLIETILASFEMDEILYELRDHSAGLNCGRWDYIFSFIKKFQSYPDKMLPDRAKVTMTSPFMDSYVKLLIYTCHKRGVHAMGGMAAQIPIKNNEQANNAAMEKVRLDKQREVRAGHDGTWVAHPALIPIAMEQFNTHMKSQNQISYIPSSTAPNFEEIAKSLLSVDPVKPGDITEDGFRSNIVVGILYLEAWLNGNGCVPIHNLMEDAATAEISRSQIWQWIKHKAPLPDGKSFVTLQYYNRIFKEESDKLEKAHPNSKTLTDAIQIFNNLIVSPNFIDFLTPSCYKFVVDSERKTFSPKL</sequence>
<reference key="1">
    <citation type="journal article" date="2002" name="Nature">
        <title>Sequence and analysis of chromosome 2 of Dictyostelium discoideum.</title>
        <authorList>
            <person name="Gloeckner G."/>
            <person name="Eichinger L."/>
            <person name="Szafranski K."/>
            <person name="Pachebat J.A."/>
            <person name="Bankier A.T."/>
            <person name="Dear P.H."/>
            <person name="Lehmann R."/>
            <person name="Baumgart C."/>
            <person name="Parra G."/>
            <person name="Abril J.F."/>
            <person name="Guigo R."/>
            <person name="Kumpf K."/>
            <person name="Tunggal B."/>
            <person name="Cox E.C."/>
            <person name="Quail M.A."/>
            <person name="Platzer M."/>
            <person name="Rosenthal A."/>
            <person name="Noegel A.A."/>
        </authorList>
    </citation>
    <scope>NUCLEOTIDE SEQUENCE [LARGE SCALE GENOMIC DNA]</scope>
    <source>
        <strain>AX4</strain>
    </source>
</reference>
<reference key="2">
    <citation type="journal article" date="2005" name="Nature">
        <title>The genome of the social amoeba Dictyostelium discoideum.</title>
        <authorList>
            <person name="Eichinger L."/>
            <person name="Pachebat J.A."/>
            <person name="Gloeckner G."/>
            <person name="Rajandream M.A."/>
            <person name="Sucgang R."/>
            <person name="Berriman M."/>
            <person name="Song J."/>
            <person name="Olsen R."/>
            <person name="Szafranski K."/>
            <person name="Xu Q."/>
            <person name="Tunggal B."/>
            <person name="Kummerfeld S."/>
            <person name="Madera M."/>
            <person name="Konfortov B.A."/>
            <person name="Rivero F."/>
            <person name="Bankier A.T."/>
            <person name="Lehmann R."/>
            <person name="Hamlin N."/>
            <person name="Davies R."/>
            <person name="Gaudet P."/>
            <person name="Fey P."/>
            <person name="Pilcher K."/>
            <person name="Chen G."/>
            <person name="Saunders D."/>
            <person name="Sodergren E.J."/>
            <person name="Davis P."/>
            <person name="Kerhornou A."/>
            <person name="Nie X."/>
            <person name="Hall N."/>
            <person name="Anjard C."/>
            <person name="Hemphill L."/>
            <person name="Bason N."/>
            <person name="Farbrother P."/>
            <person name="Desany B."/>
            <person name="Just E."/>
            <person name="Morio T."/>
            <person name="Rost R."/>
            <person name="Churcher C.M."/>
            <person name="Cooper J."/>
            <person name="Haydock S."/>
            <person name="van Driessche N."/>
            <person name="Cronin A."/>
            <person name="Goodhead I."/>
            <person name="Muzny D.M."/>
            <person name="Mourier T."/>
            <person name="Pain A."/>
            <person name="Lu M."/>
            <person name="Harper D."/>
            <person name="Lindsay R."/>
            <person name="Hauser H."/>
            <person name="James K.D."/>
            <person name="Quiles M."/>
            <person name="Madan Babu M."/>
            <person name="Saito T."/>
            <person name="Buchrieser C."/>
            <person name="Wardroper A."/>
            <person name="Felder M."/>
            <person name="Thangavelu M."/>
            <person name="Johnson D."/>
            <person name="Knights A."/>
            <person name="Loulseged H."/>
            <person name="Mungall K.L."/>
            <person name="Oliver K."/>
            <person name="Price C."/>
            <person name="Quail M.A."/>
            <person name="Urushihara H."/>
            <person name="Hernandez J."/>
            <person name="Rabbinowitsch E."/>
            <person name="Steffen D."/>
            <person name="Sanders M."/>
            <person name="Ma J."/>
            <person name="Kohara Y."/>
            <person name="Sharp S."/>
            <person name="Simmonds M.N."/>
            <person name="Spiegler S."/>
            <person name="Tivey A."/>
            <person name="Sugano S."/>
            <person name="White B."/>
            <person name="Walker D."/>
            <person name="Woodward J.R."/>
            <person name="Winckler T."/>
            <person name="Tanaka Y."/>
            <person name="Shaulsky G."/>
            <person name="Schleicher M."/>
            <person name="Weinstock G.M."/>
            <person name="Rosenthal A."/>
            <person name="Cox E.C."/>
            <person name="Chisholm R.L."/>
            <person name="Gibbs R.A."/>
            <person name="Loomis W.F."/>
            <person name="Platzer M."/>
            <person name="Kay R.R."/>
            <person name="Williams J.G."/>
            <person name="Dear P.H."/>
            <person name="Noegel A.A."/>
            <person name="Barrell B.G."/>
            <person name="Kuspa A."/>
        </authorList>
    </citation>
    <scope>NUCLEOTIDE SEQUENCE [LARGE SCALE GENOMIC DNA]</scope>
    <source>
        <strain>AX4</strain>
    </source>
</reference>
<reference key="3">
    <citation type="journal article" date="2003" name="Eukaryot. Cell">
        <title>Changing patterns of gene expression in Dictyostelium prestalk cell subtypes recognized by in situ hybridization with genes from microarray analyses.</title>
        <authorList>
            <person name="Maeda M."/>
            <person name="Sakamoto H."/>
            <person name="Iranfar N."/>
            <person name="Fuller D."/>
            <person name="Maruo T."/>
            <person name="Ogihara S."/>
            <person name="Morio T."/>
            <person name="Urushihara H."/>
            <person name="Tanaka Y."/>
            <person name="Loomis W.F."/>
        </authorList>
    </citation>
    <scope>DEVELOPMENTAL STAGE</scope>
</reference>
<accession>Q8T2K9</accession>
<accession>Q552X6</accession>
<dbReference type="EC" id="2.3.3.9"/>
<dbReference type="EMBL" id="AAFI02000013">
    <property type="protein sequence ID" value="EAL69694.2"/>
    <property type="molecule type" value="Genomic_DNA"/>
</dbReference>
<dbReference type="RefSeq" id="XP_643552.2">
    <property type="nucleotide sequence ID" value="XM_638460.2"/>
</dbReference>
<dbReference type="SMR" id="Q8T2K9"/>
<dbReference type="FunCoup" id="Q8T2K9">
    <property type="interactions" value="116"/>
</dbReference>
<dbReference type="STRING" id="44689.Q8T2K9"/>
<dbReference type="PaxDb" id="44689-DDB0230181"/>
<dbReference type="EnsemblProtists" id="EAL69694">
    <property type="protein sequence ID" value="EAL69694"/>
    <property type="gene ID" value="DDB_G0275887"/>
</dbReference>
<dbReference type="GeneID" id="8620134"/>
<dbReference type="KEGG" id="ddi:DDB_G0275887"/>
<dbReference type="dictyBase" id="DDB_G0275887">
    <property type="gene designation" value="masA"/>
</dbReference>
<dbReference type="VEuPathDB" id="AmoebaDB:DDB_G0275887"/>
<dbReference type="eggNOG" id="KOG1261">
    <property type="taxonomic scope" value="Eukaryota"/>
</dbReference>
<dbReference type="HOGENOM" id="CLU_018928_3_0_1"/>
<dbReference type="InParanoid" id="Q8T2K9"/>
<dbReference type="OMA" id="WHLPERH"/>
<dbReference type="PhylomeDB" id="Q8T2K9"/>
<dbReference type="UniPathway" id="UPA00703">
    <property type="reaction ID" value="UER00720"/>
</dbReference>
<dbReference type="PRO" id="PR:Q8T2K9"/>
<dbReference type="Proteomes" id="UP000002195">
    <property type="component" value="Chromosome 2"/>
</dbReference>
<dbReference type="GO" id="GO:0005737">
    <property type="term" value="C:cytoplasm"/>
    <property type="evidence" value="ECO:0000318"/>
    <property type="project" value="GO_Central"/>
</dbReference>
<dbReference type="GO" id="GO:0005782">
    <property type="term" value="C:peroxisomal matrix"/>
    <property type="evidence" value="ECO:0000318"/>
    <property type="project" value="GO_Central"/>
</dbReference>
<dbReference type="GO" id="GO:0004474">
    <property type="term" value="F:malate synthase activity"/>
    <property type="evidence" value="ECO:0000318"/>
    <property type="project" value="GO_Central"/>
</dbReference>
<dbReference type="GO" id="GO:0006097">
    <property type="term" value="P:glyoxylate cycle"/>
    <property type="evidence" value="ECO:0000318"/>
    <property type="project" value="GO_Central"/>
</dbReference>
<dbReference type="GO" id="GO:0006099">
    <property type="term" value="P:tricarboxylic acid cycle"/>
    <property type="evidence" value="ECO:0007669"/>
    <property type="project" value="UniProtKB-KW"/>
</dbReference>
<dbReference type="CDD" id="cd00727">
    <property type="entry name" value="malate_synt_A"/>
    <property type="match status" value="1"/>
</dbReference>
<dbReference type="FunFam" id="1.20.1220.12:FF:000001">
    <property type="entry name" value="Malate synthase"/>
    <property type="match status" value="1"/>
</dbReference>
<dbReference type="FunFam" id="3.20.20.360:FF:000001">
    <property type="entry name" value="Malate synthase"/>
    <property type="match status" value="1"/>
</dbReference>
<dbReference type="Gene3D" id="3.20.20.360">
    <property type="entry name" value="Malate synthase, domain 3"/>
    <property type="match status" value="1"/>
</dbReference>
<dbReference type="Gene3D" id="1.20.1220.12">
    <property type="entry name" value="Malate synthase, domain III"/>
    <property type="match status" value="1"/>
</dbReference>
<dbReference type="InterPro" id="IPR044856">
    <property type="entry name" value="Malate_synth_C_sf"/>
</dbReference>
<dbReference type="InterPro" id="IPR011076">
    <property type="entry name" value="Malate_synth_sf"/>
</dbReference>
<dbReference type="InterPro" id="IPR006252">
    <property type="entry name" value="Malate_synthA"/>
</dbReference>
<dbReference type="InterPro" id="IPR019830">
    <property type="entry name" value="Malate_synthase_CS"/>
</dbReference>
<dbReference type="InterPro" id="IPR001465">
    <property type="entry name" value="Malate_synthase_TIM"/>
</dbReference>
<dbReference type="InterPro" id="IPR048355">
    <property type="entry name" value="MS_C"/>
</dbReference>
<dbReference type="InterPro" id="IPR048356">
    <property type="entry name" value="MS_N"/>
</dbReference>
<dbReference type="InterPro" id="IPR046363">
    <property type="entry name" value="MS_N_TIM-barrel_dom"/>
</dbReference>
<dbReference type="NCBIfam" id="TIGR01344">
    <property type="entry name" value="malate_syn_A"/>
    <property type="match status" value="1"/>
</dbReference>
<dbReference type="PANTHER" id="PTHR42902">
    <property type="entry name" value="MALATE SYNTHASE"/>
    <property type="match status" value="1"/>
</dbReference>
<dbReference type="PANTHER" id="PTHR42902:SF1">
    <property type="entry name" value="MALATE SYNTHASE 1-RELATED"/>
    <property type="match status" value="1"/>
</dbReference>
<dbReference type="Pfam" id="PF20659">
    <property type="entry name" value="MS_C"/>
    <property type="match status" value="1"/>
</dbReference>
<dbReference type="Pfam" id="PF20656">
    <property type="entry name" value="MS_N"/>
    <property type="match status" value="1"/>
</dbReference>
<dbReference type="Pfam" id="PF01274">
    <property type="entry name" value="MS_TIM-barrel"/>
    <property type="match status" value="1"/>
</dbReference>
<dbReference type="PIRSF" id="PIRSF001363">
    <property type="entry name" value="Malate_synth"/>
    <property type="match status" value="1"/>
</dbReference>
<dbReference type="SUPFAM" id="SSF51645">
    <property type="entry name" value="Malate synthase G"/>
    <property type="match status" value="1"/>
</dbReference>
<dbReference type="PROSITE" id="PS00510">
    <property type="entry name" value="MALATE_SYNTHASE"/>
    <property type="match status" value="1"/>
</dbReference>
<proteinExistence type="evidence at transcript level"/>
<organism>
    <name type="scientific">Dictyostelium discoideum</name>
    <name type="common">Social amoeba</name>
    <dbReference type="NCBI Taxonomy" id="44689"/>
    <lineage>
        <taxon>Eukaryota</taxon>
        <taxon>Amoebozoa</taxon>
        <taxon>Evosea</taxon>
        <taxon>Eumycetozoa</taxon>
        <taxon>Dictyostelia</taxon>
        <taxon>Dictyosteliales</taxon>
        <taxon>Dictyosteliaceae</taxon>
        <taxon>Dictyostelium</taxon>
    </lineage>
</organism>